<reference key="1">
    <citation type="journal article" date="1990" name="Nature">
        <title>Disruption of the actin cytoskeleton in yeast capping protein mutants.</title>
        <authorList>
            <person name="Amatruda J.F."/>
            <person name="Cannon J.F."/>
            <person name="Tatchell K."/>
            <person name="Hug C."/>
            <person name="Cooper J.A."/>
        </authorList>
    </citation>
    <scope>NUCLEOTIDE SEQUENCE [GENOMIC DNA]</scope>
</reference>
<reference key="2">
    <citation type="submission" date="1991-10" db="EMBL/GenBank/DDBJ databases">
        <authorList>
            <person name="Amatruda J.F."/>
            <person name="Gattermeir D.J."/>
            <person name="Cooper J.A."/>
        </authorList>
    </citation>
    <scope>NUCLEOTIDE SEQUENCE [GENOMIC DNA]</scope>
    <scope>SEQUENCE REVISION</scope>
</reference>
<reference key="3">
    <citation type="journal article" date="1997" name="Nature">
        <title>The nucleotide sequence of Saccharomyces cerevisiae chromosome IX.</title>
        <authorList>
            <person name="Churcher C.M."/>
            <person name="Bowman S."/>
            <person name="Badcock K."/>
            <person name="Bankier A.T."/>
            <person name="Brown D."/>
            <person name="Chillingworth T."/>
            <person name="Connor R."/>
            <person name="Devlin K."/>
            <person name="Gentles S."/>
            <person name="Hamlin N."/>
            <person name="Harris D.E."/>
            <person name="Horsnell T."/>
            <person name="Hunt S."/>
            <person name="Jagels K."/>
            <person name="Jones M."/>
            <person name="Lye G."/>
            <person name="Moule S."/>
            <person name="Odell C."/>
            <person name="Pearson D."/>
            <person name="Rajandream M.A."/>
            <person name="Rice P."/>
            <person name="Rowley N."/>
            <person name="Skelton J."/>
            <person name="Smith V."/>
            <person name="Walsh S.V."/>
            <person name="Whitehead S."/>
            <person name="Barrell B.G."/>
        </authorList>
    </citation>
    <scope>NUCLEOTIDE SEQUENCE [LARGE SCALE GENOMIC DNA]</scope>
    <source>
        <strain>ATCC 204508 / S288c</strain>
    </source>
</reference>
<reference key="4">
    <citation type="journal article" date="2014" name="G3 (Bethesda)">
        <title>The reference genome sequence of Saccharomyces cerevisiae: Then and now.</title>
        <authorList>
            <person name="Engel S.R."/>
            <person name="Dietrich F.S."/>
            <person name="Fisk D.G."/>
            <person name="Binkley G."/>
            <person name="Balakrishnan R."/>
            <person name="Costanzo M.C."/>
            <person name="Dwight S.S."/>
            <person name="Hitz B.C."/>
            <person name="Karra K."/>
            <person name="Nash R.S."/>
            <person name="Weng S."/>
            <person name="Wong E.D."/>
            <person name="Lloyd P."/>
            <person name="Skrzypek M.S."/>
            <person name="Miyasato S.R."/>
            <person name="Simison M."/>
            <person name="Cherry J.M."/>
        </authorList>
    </citation>
    <scope>GENOME REANNOTATION</scope>
    <source>
        <strain>ATCC 204508 / S288c</strain>
    </source>
</reference>
<reference key="5">
    <citation type="journal article" date="1987" name="Mol. Cell. Biol.">
        <title>Characterization of Saccharomyces cerevisiae genes encoding subunits of cyclic AMP-dependent protein kinase.</title>
        <authorList>
            <person name="Cannon J.F."/>
            <person name="Tatchell K."/>
        </authorList>
    </citation>
    <scope>NUCLEOTIDE SEQUENCE [GENOMIC DNA] OF 1-195</scope>
</reference>
<reference key="6">
    <citation type="journal article" date="1992" name="J. Cell Biol.">
        <title>Purification, characterization, and immunofluorescence localization of Saccharomyces cerevisiae capping protein.</title>
        <authorList>
            <person name="Amatruda J.F."/>
            <person name="Cooper J.A."/>
        </authorList>
    </citation>
    <scope>PROTEIN SEQUENCE OF 149-156</scope>
    <scope>FUNCTION</scope>
    <scope>SUBUNIT</scope>
    <scope>SUBCELLULAR LOCATION</scope>
</reference>
<reference key="7">
    <citation type="journal article" date="2003" name="Nature">
        <title>Global analysis of protein expression in yeast.</title>
        <authorList>
            <person name="Ghaemmaghami S."/>
            <person name="Huh W.-K."/>
            <person name="Bower K."/>
            <person name="Howson R.W."/>
            <person name="Belle A."/>
            <person name="Dephoure N."/>
            <person name="O'Shea E.K."/>
            <person name="Weissman J.S."/>
        </authorList>
    </citation>
    <scope>LEVEL OF PROTEIN EXPRESSION [LARGE SCALE ANALYSIS]</scope>
</reference>
<reference key="8">
    <citation type="journal article" date="2007" name="J. Proteome Res.">
        <title>Large-scale phosphorylation analysis of alpha-factor-arrested Saccharomyces cerevisiae.</title>
        <authorList>
            <person name="Li X."/>
            <person name="Gerber S.A."/>
            <person name="Rudner A.D."/>
            <person name="Beausoleil S.A."/>
            <person name="Haas W."/>
            <person name="Villen J."/>
            <person name="Elias J.E."/>
            <person name="Gygi S.P."/>
        </authorList>
    </citation>
    <scope>PHOSPHORYLATION [LARGE SCALE ANALYSIS] AT SER-85</scope>
    <scope>IDENTIFICATION BY MASS SPECTROMETRY [LARGE SCALE ANALYSIS]</scope>
    <source>
        <strain>ADR376</strain>
    </source>
</reference>
<reference key="9">
    <citation type="journal article" date="2008" name="Mol. Cell. Proteomics">
        <title>A multidimensional chromatography technology for in-depth phosphoproteome analysis.</title>
        <authorList>
            <person name="Albuquerque C.P."/>
            <person name="Smolka M.B."/>
            <person name="Payne S.H."/>
            <person name="Bafna V."/>
            <person name="Eng J."/>
            <person name="Zhou H."/>
        </authorList>
    </citation>
    <scope>PHOSPHORYLATION [LARGE SCALE ANALYSIS] AT SER-85</scope>
    <scope>IDENTIFICATION BY MASS SPECTROMETRY [LARGE SCALE ANALYSIS]</scope>
</reference>
<reference key="10">
    <citation type="journal article" date="2009" name="Science">
        <title>Global analysis of Cdk1 substrate phosphorylation sites provides insights into evolution.</title>
        <authorList>
            <person name="Holt L.J."/>
            <person name="Tuch B.B."/>
            <person name="Villen J."/>
            <person name="Johnson A.D."/>
            <person name="Gygi S.P."/>
            <person name="Morgan D.O."/>
        </authorList>
    </citation>
    <scope>PHOSPHORYLATION [LARGE SCALE ANALYSIS] AT SER-92</scope>
    <scope>IDENTIFICATION BY MASS SPECTROMETRY [LARGE SCALE ANALYSIS]</scope>
</reference>
<reference key="11">
    <citation type="journal article" date="2012" name="Proc. Natl. Acad. Sci. U.S.A.">
        <title>N-terminal acetylome analyses and functional insights of the N-terminal acetyltransferase NatB.</title>
        <authorList>
            <person name="Van Damme P."/>
            <person name="Lasa M."/>
            <person name="Polevoda B."/>
            <person name="Gazquez C."/>
            <person name="Elosegui-Artola A."/>
            <person name="Kim D.S."/>
            <person name="De Juan-Pardo E."/>
            <person name="Demeyer K."/>
            <person name="Hole K."/>
            <person name="Larrea E."/>
            <person name="Timmerman E."/>
            <person name="Prieto J."/>
            <person name="Arnesen T."/>
            <person name="Sherman F."/>
            <person name="Gevaert K."/>
            <person name="Aldabe R."/>
        </authorList>
    </citation>
    <scope>ACETYLATION [LARGE SCALE ANALYSIS] AT SER-2</scope>
    <scope>CLEAVAGE OF INITIATOR METHIONINE [LARGE SCALE ANALYSIS]</scope>
    <scope>IDENTIFICATION BY MASS SPECTROMETRY [LARGE SCALE ANALYSIS]</scope>
</reference>
<reference key="12">
    <citation type="journal article" date="2024" name="Mol. Biol. Cell">
        <title>Bsp1, a fungal CPI motif protein, regulates actin filament capping in endocytosis and cytokinesis.</title>
        <authorList>
            <person name="Hummel D.R."/>
            <person name="Hakala M."/>
            <person name="Toret C.P."/>
            <person name="Kaksonen M."/>
        </authorList>
    </citation>
    <scope>IDENTIFICATION IN THE F-ACTIN CAPPING COMPLEX</scope>
    <scope>INTERACTION WITH BSP1</scope>
</reference>
<comment type="function">
    <text evidence="2">F-actin-capping proteins bind in a Ca(2+)-independent manner to the fast growing ends of actin filaments (barbed end) thereby blocking the exchange of subunits at these ends. Unlike other capping proteins (such as gelsolin and severin), these proteins do not sever actin filaments.</text>
</comment>
<comment type="subunit">
    <text evidence="2 4">Component of the F-actin capping complex, composed of a heterodimer of an alpha and a beta subunit (PubMed:1315784, PubMed:38088874). Interacts with BSP1 (via C-terminus); leading to recruitment of the F-actin capping complex to actin cortical patches and the acomyosin contractile ring (PubMed:38088874).</text>
</comment>
<comment type="interaction">
    <interactant intactId="EBI-4013">
        <id>P13517</id>
    </interactant>
    <interactant intactId="EBI-25376">
        <id>P40563</id>
        <label>AIM21</label>
    </interactant>
    <organismsDiffer>false</organismsDiffer>
    <experiments>3</experiments>
</comment>
<comment type="interaction">
    <interactant intactId="EBI-4013">
        <id>P13517</id>
    </interactant>
    <interactant intactId="EBI-4003">
        <id>P28495</id>
        <label>CAP1</label>
    </interactant>
    <organismsDiffer>false</organismsDiffer>
    <experiments>6</experiments>
</comment>
<comment type="subcellular location">
    <subcellularLocation>
        <location evidence="2">Cytoplasm</location>
        <location evidence="2">Cytoskeleton</location>
        <location evidence="2">Actin patch</location>
    </subcellularLocation>
    <subcellularLocation>
        <location evidence="2">Bud</location>
    </subcellularLocation>
    <subcellularLocation>
        <location evidence="2">Bud tip</location>
    </subcellularLocation>
    <subcellularLocation>
        <location evidence="1">Cytoplasm</location>
        <location evidence="1">Cytoskeleton</location>
    </subcellularLocation>
    <text>Found at cortical actin spots at the site of bud emergence and at the tips of growing buds and shmoos.</text>
</comment>
<comment type="miscellaneous">
    <text evidence="3">Present with 6770 molecules/cell in log phase SD medium.</text>
</comment>
<comment type="similarity">
    <text evidence="5">Belongs to the F-actin-capping protein beta subunit family.</text>
</comment>
<name>CAPZB_YEAST</name>
<sequence>MSDAQFDAALDLLRRLNPTTLQENLNNLIELQPNLAQDLLSSVDVPLSTQKDSADSNREYLCCDYNRDIDSFRSPWSNTYYPELSPKDLQDSPFPSAPLRKLEILANDSFDVYRDLYYEGGISSVYLWDLNEEDFNGHDFAGVVLFKKNQSDHSNWDSIHVFEVTTSPSSPDSFNYRVTTTIILHLDKTKTDQNSHMMLSGNLTRQTEKDIAIDMSRPLDVIFTSHVANLGSLIEDIESQMRNLLETVYFEKTRDIFHQTKNAAIASSAEEANKDAQAEVIRGLQSL</sequence>
<keyword id="KW-0007">Acetylation</keyword>
<keyword id="KW-0117">Actin capping</keyword>
<keyword id="KW-0009">Actin-binding</keyword>
<keyword id="KW-0963">Cytoplasm</keyword>
<keyword id="KW-0206">Cytoskeleton</keyword>
<keyword id="KW-0903">Direct protein sequencing</keyword>
<keyword id="KW-0597">Phosphoprotein</keyword>
<keyword id="KW-1185">Reference proteome</keyword>
<proteinExistence type="evidence at protein level"/>
<evidence type="ECO:0000250" key="1">
    <source>
        <dbReference type="UniProtKB" id="Q9HGP5"/>
    </source>
</evidence>
<evidence type="ECO:0000269" key="2">
    <source>
    </source>
</evidence>
<evidence type="ECO:0000269" key="3">
    <source>
    </source>
</evidence>
<evidence type="ECO:0000269" key="4">
    <source>
    </source>
</evidence>
<evidence type="ECO:0000305" key="5"/>
<evidence type="ECO:0007744" key="6">
    <source>
    </source>
</evidence>
<evidence type="ECO:0007744" key="7">
    <source>
    </source>
</evidence>
<evidence type="ECO:0007744" key="8">
    <source>
    </source>
</evidence>
<evidence type="ECO:0007744" key="9">
    <source>
    </source>
</evidence>
<organism>
    <name type="scientific">Saccharomyces cerevisiae (strain ATCC 204508 / S288c)</name>
    <name type="common">Baker's yeast</name>
    <dbReference type="NCBI Taxonomy" id="559292"/>
    <lineage>
        <taxon>Eukaryota</taxon>
        <taxon>Fungi</taxon>
        <taxon>Dikarya</taxon>
        <taxon>Ascomycota</taxon>
        <taxon>Saccharomycotina</taxon>
        <taxon>Saccharomycetes</taxon>
        <taxon>Saccharomycetales</taxon>
        <taxon>Saccharomycetaceae</taxon>
        <taxon>Saccharomyces</taxon>
    </lineage>
</organism>
<protein>
    <recommendedName>
        <fullName>F-actin-capping protein subunit beta</fullName>
    </recommendedName>
</protein>
<accession>P13517</accession>
<accession>D6VVP8</accession>
<accession>Q07082</accession>
<dbReference type="EMBL" id="X62630">
    <property type="protein sequence ID" value="CAA44497.1"/>
    <property type="molecule type" value="Genomic_DNA"/>
</dbReference>
<dbReference type="EMBL" id="Z46861">
    <property type="protein sequence ID" value="CAA86917.1"/>
    <property type="molecule type" value="Genomic_DNA"/>
</dbReference>
<dbReference type="EMBL" id="M17223">
    <property type="protein sequence ID" value="AAA66935.1"/>
    <property type="molecule type" value="Genomic_DNA"/>
</dbReference>
<dbReference type="EMBL" id="BK006942">
    <property type="protein sequence ID" value="DAA08514.1"/>
    <property type="molecule type" value="Genomic_DNA"/>
</dbReference>
<dbReference type="PIR" id="S49944">
    <property type="entry name" value="S49944"/>
</dbReference>
<dbReference type="RefSeq" id="NP_012230.3">
    <property type="nucleotide sequence ID" value="NM_001179384.3"/>
</dbReference>
<dbReference type="SMR" id="P13517"/>
<dbReference type="BioGRID" id="34956">
    <property type="interactions" value="218"/>
</dbReference>
<dbReference type="ComplexPortal" id="CPX-1637">
    <property type="entry name" value="F-actin capping protein complex"/>
</dbReference>
<dbReference type="DIP" id="DIP-836N"/>
<dbReference type="FunCoup" id="P13517">
    <property type="interactions" value="1076"/>
</dbReference>
<dbReference type="IntAct" id="P13517">
    <property type="interactions" value="18"/>
</dbReference>
<dbReference type="MINT" id="P13517"/>
<dbReference type="STRING" id="4932.YIL034C"/>
<dbReference type="iPTMnet" id="P13517"/>
<dbReference type="PaxDb" id="4932-YIL034C"/>
<dbReference type="PeptideAtlas" id="P13517"/>
<dbReference type="EnsemblFungi" id="YIL034C_mRNA">
    <property type="protein sequence ID" value="YIL034C"/>
    <property type="gene ID" value="YIL034C"/>
</dbReference>
<dbReference type="GeneID" id="854777"/>
<dbReference type="KEGG" id="sce:YIL034C"/>
<dbReference type="AGR" id="SGD:S000001296"/>
<dbReference type="SGD" id="S000001296">
    <property type="gene designation" value="CAP2"/>
</dbReference>
<dbReference type="VEuPathDB" id="FungiDB:YIL034C"/>
<dbReference type="eggNOG" id="KOG3174">
    <property type="taxonomic scope" value="Eukaryota"/>
</dbReference>
<dbReference type="GeneTree" id="ENSGT00390000017957"/>
<dbReference type="HOGENOM" id="CLU_045864_1_1_1"/>
<dbReference type="InParanoid" id="P13517"/>
<dbReference type="OMA" id="WSNKYYP"/>
<dbReference type="OrthoDB" id="9979678at2759"/>
<dbReference type="BioCyc" id="YEAST:G3O-31306-MONOMER"/>
<dbReference type="Reactome" id="R-SCE-9013405">
    <property type="pathway name" value="RHOD GTPase cycle"/>
</dbReference>
<dbReference type="Reactome" id="R-SCE-983231">
    <property type="pathway name" value="Factors involved in megakaryocyte development and platelet production"/>
</dbReference>
<dbReference type="BioGRID-ORCS" id="854777">
    <property type="hits" value="5 hits in 10 CRISPR screens"/>
</dbReference>
<dbReference type="PRO" id="PR:P13517"/>
<dbReference type="Proteomes" id="UP000002311">
    <property type="component" value="Chromosome IX"/>
</dbReference>
<dbReference type="RNAct" id="P13517">
    <property type="molecule type" value="protein"/>
</dbReference>
<dbReference type="GO" id="GO:0030479">
    <property type="term" value="C:actin cortical patch"/>
    <property type="evidence" value="ECO:0000314"/>
    <property type="project" value="SGD"/>
</dbReference>
<dbReference type="GO" id="GO:0015629">
    <property type="term" value="C:actin cytoskeleton"/>
    <property type="evidence" value="ECO:0000314"/>
    <property type="project" value="ComplexPortal"/>
</dbReference>
<dbReference type="GO" id="GO:0000142">
    <property type="term" value="C:cellular bud neck contractile ring"/>
    <property type="evidence" value="ECO:0000314"/>
    <property type="project" value="SGD"/>
</dbReference>
<dbReference type="GO" id="GO:0005934">
    <property type="term" value="C:cellular bud tip"/>
    <property type="evidence" value="ECO:0000314"/>
    <property type="project" value="SGD"/>
</dbReference>
<dbReference type="GO" id="GO:0008290">
    <property type="term" value="C:F-actin capping protein complex"/>
    <property type="evidence" value="ECO:0000314"/>
    <property type="project" value="SGD"/>
</dbReference>
<dbReference type="GO" id="GO:0000131">
    <property type="term" value="C:incipient cellular bud site"/>
    <property type="evidence" value="ECO:0000314"/>
    <property type="project" value="SGD"/>
</dbReference>
<dbReference type="GO" id="GO:0043332">
    <property type="term" value="C:mating projection tip"/>
    <property type="evidence" value="ECO:0007005"/>
    <property type="project" value="SGD"/>
</dbReference>
<dbReference type="GO" id="GO:0005886">
    <property type="term" value="C:plasma membrane"/>
    <property type="evidence" value="ECO:0007005"/>
    <property type="project" value="SGD"/>
</dbReference>
<dbReference type="GO" id="GO:0051015">
    <property type="term" value="F:actin filament binding"/>
    <property type="evidence" value="ECO:0000315"/>
    <property type="project" value="SGD"/>
</dbReference>
<dbReference type="GO" id="GO:0030036">
    <property type="term" value="P:actin cytoskeleton organization"/>
    <property type="evidence" value="ECO:0007669"/>
    <property type="project" value="InterPro"/>
</dbReference>
<dbReference type="GO" id="GO:0051016">
    <property type="term" value="P:barbed-end actin filament capping"/>
    <property type="evidence" value="ECO:0000314"/>
    <property type="project" value="SGD"/>
</dbReference>
<dbReference type="GO" id="GO:0000902">
    <property type="term" value="P:cell morphogenesis"/>
    <property type="evidence" value="ECO:0000318"/>
    <property type="project" value="GO_Central"/>
</dbReference>
<dbReference type="GO" id="GO:0030447">
    <property type="term" value="P:filamentous growth"/>
    <property type="evidence" value="ECO:0000315"/>
    <property type="project" value="SGD"/>
</dbReference>
<dbReference type="FunFam" id="1.20.58.570:FF:000001">
    <property type="entry name" value="F-actin-capping protein subunit beta"/>
    <property type="match status" value="1"/>
</dbReference>
<dbReference type="FunFam" id="3.90.1150.210:FF:000004">
    <property type="entry name" value="F-actin-capping protein subunit beta"/>
    <property type="match status" value="1"/>
</dbReference>
<dbReference type="Gene3D" id="1.20.58.570">
    <property type="match status" value="1"/>
</dbReference>
<dbReference type="Gene3D" id="3.90.1150.210">
    <property type="entry name" value="F-actin capping protein, beta subunit"/>
    <property type="match status" value="1"/>
</dbReference>
<dbReference type="InterPro" id="IPR037282">
    <property type="entry name" value="CapZ_alpha/beta"/>
</dbReference>
<dbReference type="InterPro" id="IPR042276">
    <property type="entry name" value="CapZ_alpha/beta_2"/>
</dbReference>
<dbReference type="InterPro" id="IPR001698">
    <property type="entry name" value="CAPZB"/>
</dbReference>
<dbReference type="InterPro" id="IPR043175">
    <property type="entry name" value="CAPZB_N"/>
</dbReference>
<dbReference type="InterPro" id="IPR019771">
    <property type="entry name" value="F-actin_capping_bsu_CS"/>
</dbReference>
<dbReference type="PANTHER" id="PTHR10619">
    <property type="entry name" value="F-ACTIN-CAPPING PROTEIN SUBUNIT BETA"/>
    <property type="match status" value="1"/>
</dbReference>
<dbReference type="PANTHER" id="PTHR10619:SF0">
    <property type="entry name" value="F-ACTIN-CAPPING PROTEIN SUBUNIT BETA ISOFORMS 1 AND 2"/>
    <property type="match status" value="1"/>
</dbReference>
<dbReference type="Pfam" id="PF01115">
    <property type="entry name" value="F_actin_cap_B"/>
    <property type="match status" value="1"/>
</dbReference>
<dbReference type="PRINTS" id="PR00192">
    <property type="entry name" value="FACTINCAPB"/>
</dbReference>
<dbReference type="SUPFAM" id="SSF90096">
    <property type="entry name" value="Subunits of heterodimeric actin filament capping protein Capz"/>
    <property type="match status" value="1"/>
</dbReference>
<dbReference type="PROSITE" id="PS00231">
    <property type="entry name" value="F_ACTIN_CAPPING_BETA"/>
    <property type="match status" value="1"/>
</dbReference>
<gene>
    <name type="primary">CAP2</name>
    <name type="ordered locus">YIL034C</name>
</gene>
<feature type="initiator methionine" description="Removed" evidence="9">
    <location>
        <position position="1"/>
    </location>
</feature>
<feature type="chain" id="PRO_0000204642" description="F-actin-capping protein subunit beta">
    <location>
        <begin position="2"/>
        <end position="287"/>
    </location>
</feature>
<feature type="modified residue" description="N-acetylserine" evidence="9">
    <location>
        <position position="2"/>
    </location>
</feature>
<feature type="modified residue" description="Phosphoserine" evidence="6 7">
    <location>
        <position position="85"/>
    </location>
</feature>
<feature type="modified residue" description="Phosphoserine" evidence="8">
    <location>
        <position position="92"/>
    </location>
</feature>
<feature type="sequence conflict" description="In Ref. 5; AAA66935." evidence="5" ref="5">
    <original>F</original>
    <variation>Y</variation>
    <location>
        <position position="140"/>
    </location>
</feature>
<feature type="sequence conflict" description="In Ref. 5; AAA66935." evidence="5" ref="5">
    <original>FK</original>
    <variation>I</variation>
    <location>
        <begin position="146"/>
        <end position="147"/>
    </location>
</feature>